<evidence type="ECO:0000255" key="1">
    <source>
        <dbReference type="HAMAP-Rule" id="MF_00080"/>
    </source>
</evidence>
<organism>
    <name type="scientific">Streptococcus pyogenes serotype M12 (strain MGAS2096)</name>
    <dbReference type="NCBI Taxonomy" id="370553"/>
    <lineage>
        <taxon>Bacteria</taxon>
        <taxon>Bacillati</taxon>
        <taxon>Bacillota</taxon>
        <taxon>Bacilli</taxon>
        <taxon>Lactobacillales</taxon>
        <taxon>Streptococcaceae</taxon>
        <taxon>Streptococcus</taxon>
    </lineage>
</organism>
<protein>
    <recommendedName>
        <fullName evidence="1">Translation initiation factor IF-3</fullName>
    </recommendedName>
</protein>
<gene>
    <name evidence="1" type="primary">infC</name>
    <name type="ordered locus">MGAS2096_Spy0684</name>
</gene>
<proteinExistence type="inferred from homology"/>
<reference key="1">
    <citation type="journal article" date="2006" name="Proc. Natl. Acad. Sci. U.S.A.">
        <title>Molecular genetic anatomy of inter- and intraserotype variation in the human bacterial pathogen group A Streptococcus.</title>
        <authorList>
            <person name="Beres S.B."/>
            <person name="Richter E.W."/>
            <person name="Nagiec M.J."/>
            <person name="Sumby P."/>
            <person name="Porcella S.F."/>
            <person name="DeLeo F.R."/>
            <person name="Musser J.M."/>
        </authorList>
    </citation>
    <scope>NUCLEOTIDE SEQUENCE [LARGE SCALE GENOMIC DNA]</scope>
    <source>
        <strain>MGAS2096</strain>
    </source>
</reference>
<name>IF3_STRPB</name>
<accession>Q1JCH2</accession>
<dbReference type="EMBL" id="CP000261">
    <property type="protein sequence ID" value="ABF35736.1"/>
    <property type="molecule type" value="Genomic_DNA"/>
</dbReference>
<dbReference type="SMR" id="Q1JCH2"/>
<dbReference type="KEGG" id="spj:MGAS2096_Spy0684"/>
<dbReference type="HOGENOM" id="CLU_054919_3_2_9"/>
<dbReference type="GO" id="GO:0005829">
    <property type="term" value="C:cytosol"/>
    <property type="evidence" value="ECO:0007669"/>
    <property type="project" value="TreeGrafter"/>
</dbReference>
<dbReference type="GO" id="GO:0016020">
    <property type="term" value="C:membrane"/>
    <property type="evidence" value="ECO:0007669"/>
    <property type="project" value="TreeGrafter"/>
</dbReference>
<dbReference type="GO" id="GO:0043022">
    <property type="term" value="F:ribosome binding"/>
    <property type="evidence" value="ECO:0007669"/>
    <property type="project" value="TreeGrafter"/>
</dbReference>
<dbReference type="GO" id="GO:0003743">
    <property type="term" value="F:translation initiation factor activity"/>
    <property type="evidence" value="ECO:0007669"/>
    <property type="project" value="UniProtKB-UniRule"/>
</dbReference>
<dbReference type="GO" id="GO:0032790">
    <property type="term" value="P:ribosome disassembly"/>
    <property type="evidence" value="ECO:0007669"/>
    <property type="project" value="TreeGrafter"/>
</dbReference>
<dbReference type="FunFam" id="3.10.20.80:FF:000001">
    <property type="entry name" value="Translation initiation factor IF-3"/>
    <property type="match status" value="1"/>
</dbReference>
<dbReference type="FunFam" id="3.30.110.10:FF:000001">
    <property type="entry name" value="Translation initiation factor IF-3"/>
    <property type="match status" value="1"/>
</dbReference>
<dbReference type="Gene3D" id="3.30.110.10">
    <property type="entry name" value="Translation initiation factor 3 (IF-3), C-terminal domain"/>
    <property type="match status" value="1"/>
</dbReference>
<dbReference type="Gene3D" id="3.10.20.80">
    <property type="entry name" value="Translation initiation factor 3 (IF-3), N-terminal domain"/>
    <property type="match status" value="1"/>
</dbReference>
<dbReference type="HAMAP" id="MF_00080">
    <property type="entry name" value="IF_3"/>
    <property type="match status" value="1"/>
</dbReference>
<dbReference type="InterPro" id="IPR036788">
    <property type="entry name" value="T_IF-3_C_sf"/>
</dbReference>
<dbReference type="InterPro" id="IPR036787">
    <property type="entry name" value="T_IF-3_N_sf"/>
</dbReference>
<dbReference type="InterPro" id="IPR019813">
    <property type="entry name" value="Translation_initiation_fac3_CS"/>
</dbReference>
<dbReference type="InterPro" id="IPR001288">
    <property type="entry name" value="Translation_initiation_fac_3"/>
</dbReference>
<dbReference type="InterPro" id="IPR019815">
    <property type="entry name" value="Translation_initiation_fac_3_C"/>
</dbReference>
<dbReference type="InterPro" id="IPR019814">
    <property type="entry name" value="Translation_initiation_fac_3_N"/>
</dbReference>
<dbReference type="NCBIfam" id="TIGR00168">
    <property type="entry name" value="infC"/>
    <property type="match status" value="1"/>
</dbReference>
<dbReference type="PANTHER" id="PTHR10938">
    <property type="entry name" value="TRANSLATION INITIATION FACTOR IF-3"/>
    <property type="match status" value="1"/>
</dbReference>
<dbReference type="PANTHER" id="PTHR10938:SF0">
    <property type="entry name" value="TRANSLATION INITIATION FACTOR IF-3, MITOCHONDRIAL"/>
    <property type="match status" value="1"/>
</dbReference>
<dbReference type="Pfam" id="PF00707">
    <property type="entry name" value="IF3_C"/>
    <property type="match status" value="1"/>
</dbReference>
<dbReference type="Pfam" id="PF05198">
    <property type="entry name" value="IF3_N"/>
    <property type="match status" value="1"/>
</dbReference>
<dbReference type="SUPFAM" id="SSF55200">
    <property type="entry name" value="Translation initiation factor IF3, C-terminal domain"/>
    <property type="match status" value="1"/>
</dbReference>
<dbReference type="SUPFAM" id="SSF54364">
    <property type="entry name" value="Translation initiation factor IF3, N-terminal domain"/>
    <property type="match status" value="1"/>
</dbReference>
<dbReference type="PROSITE" id="PS00938">
    <property type="entry name" value="IF3"/>
    <property type="match status" value="1"/>
</dbReference>
<feature type="chain" id="PRO_1000004572" description="Translation initiation factor IF-3">
    <location>
        <begin position="1"/>
        <end position="176"/>
    </location>
</feature>
<sequence>MKIIAKKDLFINDEIRVREVRLVGLEGEQLGIKPLSEAQSLADASNVDLVLIQPQAVPPVAKLMDYGKFKFEYQKKQKEQRKKQSVVTVKEVRLSPVIDKGDFETKLRNGRKFLEKGNKVKVSIRFKGRMITHKEIGAKVLADFAEATQDIAIIEQRAKMDGRQMFMQLAPISDKK</sequence>
<keyword id="KW-0963">Cytoplasm</keyword>
<keyword id="KW-0396">Initiation factor</keyword>
<keyword id="KW-0648">Protein biosynthesis</keyword>
<comment type="function">
    <text evidence="1">IF-3 binds to the 30S ribosomal subunit and shifts the equilibrium between 70S ribosomes and their 50S and 30S subunits in favor of the free subunits, thus enhancing the availability of 30S subunits on which protein synthesis initiation begins.</text>
</comment>
<comment type="subunit">
    <text evidence="1">Monomer.</text>
</comment>
<comment type="subcellular location">
    <subcellularLocation>
        <location evidence="1">Cytoplasm</location>
    </subcellularLocation>
</comment>
<comment type="similarity">
    <text evidence="1">Belongs to the IF-3 family.</text>
</comment>